<proteinExistence type="inferred from homology"/>
<accession>P0A864</accession>
<accession>P37901</accession>
<accession>P57669</accession>
<accession>P76047</accession>
<accession>P77786</accession>
<reference key="1">
    <citation type="journal article" date="2001" name="Nature">
        <title>Genome sequence of enterohaemorrhagic Escherichia coli O157:H7.</title>
        <authorList>
            <person name="Perna N.T."/>
            <person name="Plunkett G. III"/>
            <person name="Burland V."/>
            <person name="Mau B."/>
            <person name="Glasner J.D."/>
            <person name="Rose D.J."/>
            <person name="Mayhew G.F."/>
            <person name="Evans P.S."/>
            <person name="Gregor J."/>
            <person name="Kirkpatrick H.A."/>
            <person name="Posfai G."/>
            <person name="Hackett J."/>
            <person name="Klink S."/>
            <person name="Boutin A."/>
            <person name="Shao Y."/>
            <person name="Miller L."/>
            <person name="Grotbeck E.J."/>
            <person name="Davis N.W."/>
            <person name="Lim A."/>
            <person name="Dimalanta E.T."/>
            <person name="Potamousis K."/>
            <person name="Apodaca J."/>
            <person name="Anantharaman T.S."/>
            <person name="Lin J."/>
            <person name="Yen G."/>
            <person name="Schwartz D.C."/>
            <person name="Welch R.A."/>
            <person name="Blattner F.R."/>
        </authorList>
    </citation>
    <scope>NUCLEOTIDE SEQUENCE [LARGE SCALE GENOMIC DNA]</scope>
    <source>
        <strain>O157:H7 / EDL933 / ATCC 700927 / EHEC</strain>
    </source>
</reference>
<reference key="2">
    <citation type="journal article" date="2001" name="DNA Res.">
        <title>Complete genome sequence of enterohemorrhagic Escherichia coli O157:H7 and genomic comparison with a laboratory strain K-12.</title>
        <authorList>
            <person name="Hayashi T."/>
            <person name="Makino K."/>
            <person name="Ohnishi M."/>
            <person name="Kurokawa K."/>
            <person name="Ishii K."/>
            <person name="Yokoyama K."/>
            <person name="Han C.-G."/>
            <person name="Ohtsubo E."/>
            <person name="Nakayama K."/>
            <person name="Murata T."/>
            <person name="Tanaka M."/>
            <person name="Tobe T."/>
            <person name="Iida T."/>
            <person name="Takami H."/>
            <person name="Honda T."/>
            <person name="Sasakawa C."/>
            <person name="Ogasawara N."/>
            <person name="Yasunaga T."/>
            <person name="Kuhara S."/>
            <person name="Shiba T."/>
            <person name="Hattori M."/>
            <person name="Shinagawa H."/>
        </authorList>
    </citation>
    <scope>NUCLEOTIDE SEQUENCE [LARGE SCALE GENOMIC DNA]</scope>
    <source>
        <strain>O157:H7 / Sakai / RIMD 0509952 / EHEC</strain>
    </source>
</reference>
<organism>
    <name type="scientific">Escherichia coli O157:H7</name>
    <dbReference type="NCBI Taxonomy" id="83334"/>
    <lineage>
        <taxon>Bacteria</taxon>
        <taxon>Pseudomonadati</taxon>
        <taxon>Pseudomonadota</taxon>
        <taxon>Gammaproteobacteria</taxon>
        <taxon>Enterobacterales</taxon>
        <taxon>Enterobacteriaceae</taxon>
        <taxon>Escherichia</taxon>
    </lineage>
</organism>
<sequence length="168" mass="17835">MSQTVHFQGNPVTVANSIPQAGSKAQTFTLVAKDLSDVTLGQFAGKRKVLNIFPSIDTGVCAASVRKFNQLATEIDNTVVLCISADLPFAQSRFCGAEGLNNVITLSTFRNAEFLQAYGVAIADGPLKGLAARAVVVIDENDNVIFSQLVDEITTEPDYEAALAVLKA</sequence>
<dbReference type="EC" id="1.11.1.24" evidence="2"/>
<dbReference type="EMBL" id="AE005174">
    <property type="protein sequence ID" value="AAG56478.1"/>
    <property type="molecule type" value="Genomic_DNA"/>
</dbReference>
<dbReference type="EMBL" id="BA000007">
    <property type="protein sequence ID" value="BAB35326.1"/>
    <property type="molecule type" value="Genomic_DNA"/>
</dbReference>
<dbReference type="PIR" id="B85752">
    <property type="entry name" value="B85752"/>
</dbReference>
<dbReference type="PIR" id="G90866">
    <property type="entry name" value="G90866"/>
</dbReference>
<dbReference type="RefSeq" id="NP_309930.1">
    <property type="nucleotide sequence ID" value="NC_002695.1"/>
</dbReference>
<dbReference type="RefSeq" id="WP_000084387.1">
    <property type="nucleotide sequence ID" value="NZ_VOAI01000015.1"/>
</dbReference>
<dbReference type="SMR" id="P0A864"/>
<dbReference type="STRING" id="155864.Z2452"/>
<dbReference type="GeneID" id="75203439"/>
<dbReference type="GeneID" id="912478"/>
<dbReference type="KEGG" id="ece:Z2452"/>
<dbReference type="KEGG" id="ecs:ECs_1903"/>
<dbReference type="PATRIC" id="fig|386585.9.peg.2008"/>
<dbReference type="eggNOG" id="COG2077">
    <property type="taxonomic scope" value="Bacteria"/>
</dbReference>
<dbReference type="HOGENOM" id="CLU_042529_12_2_6"/>
<dbReference type="OMA" id="ITQEPNY"/>
<dbReference type="Proteomes" id="UP000000558">
    <property type="component" value="Chromosome"/>
</dbReference>
<dbReference type="Proteomes" id="UP000002519">
    <property type="component" value="Chromosome"/>
</dbReference>
<dbReference type="GO" id="GO:0008379">
    <property type="term" value="F:thioredoxin peroxidase activity"/>
    <property type="evidence" value="ECO:0007669"/>
    <property type="project" value="UniProtKB-UniRule"/>
</dbReference>
<dbReference type="CDD" id="cd03014">
    <property type="entry name" value="PRX_Atyp2cys"/>
    <property type="match status" value="1"/>
</dbReference>
<dbReference type="FunFam" id="3.40.30.10:FF:000056">
    <property type="entry name" value="Thiol peroxidase"/>
    <property type="match status" value="1"/>
</dbReference>
<dbReference type="Gene3D" id="3.40.30.10">
    <property type="entry name" value="Glutaredoxin"/>
    <property type="match status" value="1"/>
</dbReference>
<dbReference type="HAMAP" id="MF_00269">
    <property type="entry name" value="Tpx"/>
    <property type="match status" value="1"/>
</dbReference>
<dbReference type="InterPro" id="IPR013740">
    <property type="entry name" value="Redoxin"/>
</dbReference>
<dbReference type="InterPro" id="IPR036249">
    <property type="entry name" value="Thioredoxin-like_sf"/>
</dbReference>
<dbReference type="InterPro" id="IPR013766">
    <property type="entry name" value="Thioredoxin_domain"/>
</dbReference>
<dbReference type="InterPro" id="IPR002065">
    <property type="entry name" value="TPX"/>
</dbReference>
<dbReference type="InterPro" id="IPR018219">
    <property type="entry name" value="Tpx_CS"/>
</dbReference>
<dbReference type="InterPro" id="IPR050455">
    <property type="entry name" value="Tpx_Peroxidase_subfamily"/>
</dbReference>
<dbReference type="NCBIfam" id="NF001808">
    <property type="entry name" value="PRK00522.1"/>
    <property type="match status" value="1"/>
</dbReference>
<dbReference type="PANTHER" id="PTHR43110">
    <property type="entry name" value="THIOL PEROXIDASE"/>
    <property type="match status" value="1"/>
</dbReference>
<dbReference type="PANTHER" id="PTHR43110:SF1">
    <property type="entry name" value="THIOL PEROXIDASE"/>
    <property type="match status" value="1"/>
</dbReference>
<dbReference type="Pfam" id="PF08534">
    <property type="entry name" value="Redoxin"/>
    <property type="match status" value="1"/>
</dbReference>
<dbReference type="SUPFAM" id="SSF52833">
    <property type="entry name" value="Thioredoxin-like"/>
    <property type="match status" value="1"/>
</dbReference>
<dbReference type="PROSITE" id="PS51352">
    <property type="entry name" value="THIOREDOXIN_2"/>
    <property type="match status" value="1"/>
</dbReference>
<dbReference type="PROSITE" id="PS01265">
    <property type="entry name" value="TPX"/>
    <property type="match status" value="1"/>
</dbReference>
<name>TPX_ECO57</name>
<gene>
    <name evidence="2" type="primary">tpx</name>
    <name type="ordered locus">Z2452</name>
    <name type="ordered locus">ECs1903</name>
</gene>
<keyword id="KW-0049">Antioxidant</keyword>
<keyword id="KW-1015">Disulfide bond</keyword>
<keyword id="KW-0560">Oxidoreductase</keyword>
<keyword id="KW-0575">Peroxidase</keyword>
<keyword id="KW-0676">Redox-active center</keyword>
<keyword id="KW-1185">Reference proteome</keyword>
<evidence type="ECO:0000250" key="1"/>
<evidence type="ECO:0000255" key="2">
    <source>
        <dbReference type="HAMAP-Rule" id="MF_00269"/>
    </source>
</evidence>
<feature type="initiator methionine" description="Removed" evidence="1">
    <location>
        <position position="1"/>
    </location>
</feature>
<feature type="chain" id="PRO_0000187878" description="Thiol peroxidase">
    <location>
        <begin position="2"/>
        <end position="168"/>
    </location>
</feature>
<feature type="domain" description="Thioredoxin" evidence="2">
    <location>
        <begin position="19"/>
        <end position="168"/>
    </location>
</feature>
<feature type="active site" description="Cysteine sulfenic acid (-SOH) intermediate" evidence="2">
    <location>
        <position position="61"/>
    </location>
</feature>
<feature type="disulfide bond" description="Redox-active" evidence="2">
    <location>
        <begin position="61"/>
        <end position="95"/>
    </location>
</feature>
<protein>
    <recommendedName>
        <fullName evidence="2">Thiol peroxidase</fullName>
        <shortName evidence="2">Tpx</shortName>
        <ecNumber evidence="2">1.11.1.24</ecNumber>
    </recommendedName>
    <alternativeName>
        <fullName evidence="2">Peroxiredoxin tpx</fullName>
        <shortName evidence="2">Prx</shortName>
    </alternativeName>
    <alternativeName>
        <fullName evidence="2">Thioredoxin peroxidase</fullName>
    </alternativeName>
    <alternativeName>
        <fullName evidence="2">Thioredoxin-dependent peroxiredoxin</fullName>
    </alternativeName>
</protein>
<comment type="function">
    <text evidence="2">Thiol-specific peroxidase that catalyzes the reduction of hydrogen peroxide and organic hydroperoxides to water and alcohols, respectively. Plays a role in cell protection against oxidative stress by detoxifying peroxides.</text>
</comment>
<comment type="catalytic activity">
    <reaction evidence="2">
        <text>a hydroperoxide + [thioredoxin]-dithiol = an alcohol + [thioredoxin]-disulfide + H2O</text>
        <dbReference type="Rhea" id="RHEA:62620"/>
        <dbReference type="Rhea" id="RHEA-COMP:10698"/>
        <dbReference type="Rhea" id="RHEA-COMP:10700"/>
        <dbReference type="ChEBI" id="CHEBI:15377"/>
        <dbReference type="ChEBI" id="CHEBI:29950"/>
        <dbReference type="ChEBI" id="CHEBI:30879"/>
        <dbReference type="ChEBI" id="CHEBI:35924"/>
        <dbReference type="ChEBI" id="CHEBI:50058"/>
        <dbReference type="EC" id="1.11.1.24"/>
    </reaction>
</comment>
<comment type="subunit">
    <text evidence="2">Homodimer.</text>
</comment>
<comment type="miscellaneous">
    <text evidence="2">The active site is a conserved redox-active cysteine residue, the peroxidatic cysteine (C(P)), which makes the nucleophilic attack on the peroxide substrate. The peroxide oxidizes the C(P)-SH to cysteine sulfenic acid (C(P)-SOH), which then reacts with another cysteine residue, the resolving cysteine (C(R)), to form a disulfide bridge. The disulfide is subsequently reduced by an appropriate electron donor to complete the catalytic cycle. In this atypical 2-Cys peroxiredoxin, C(R) is present in the same subunit to form an intramolecular disulfide. The disulfide is subsequently reduced by thioredoxin.</text>
</comment>
<comment type="similarity">
    <text evidence="2">Belongs to the peroxiredoxin family. Tpx subfamily.</text>
</comment>